<gene>
    <name evidence="1" type="primary">rpmE2</name>
    <name type="synonym">rpmE</name>
    <name type="ordered locus">EF_1171</name>
</gene>
<accession>Q836E3</accession>
<dbReference type="EMBL" id="AE016830">
    <property type="protein sequence ID" value="AAO80971.1"/>
    <property type="molecule type" value="Genomic_DNA"/>
</dbReference>
<dbReference type="RefSeq" id="NP_814901.1">
    <property type="nucleotide sequence ID" value="NC_004668.1"/>
</dbReference>
<dbReference type="RefSeq" id="WP_002357967.1">
    <property type="nucleotide sequence ID" value="NZ_KE136528.1"/>
</dbReference>
<dbReference type="PDB" id="7P7Q">
    <property type="method" value="EM"/>
    <property type="resolution" value="2.40 A"/>
    <property type="chains" value="3=1-89"/>
</dbReference>
<dbReference type="PDB" id="7P7R">
    <property type="method" value="EM"/>
    <property type="resolution" value="2.90 A"/>
    <property type="chains" value="3=1-89"/>
</dbReference>
<dbReference type="PDBsum" id="7P7Q"/>
<dbReference type="PDBsum" id="7P7R"/>
<dbReference type="EMDB" id="EMD-13241"/>
<dbReference type="EMDB" id="EMD-13242"/>
<dbReference type="SMR" id="Q836E3"/>
<dbReference type="STRING" id="226185.EF_1171"/>
<dbReference type="EnsemblBacteria" id="AAO80971">
    <property type="protein sequence ID" value="AAO80971"/>
    <property type="gene ID" value="EF_1171"/>
</dbReference>
<dbReference type="KEGG" id="efa:EF1171"/>
<dbReference type="PATRIC" id="fig|226185.45.peg.2326"/>
<dbReference type="eggNOG" id="COG0254">
    <property type="taxonomic scope" value="Bacteria"/>
</dbReference>
<dbReference type="HOGENOM" id="CLU_114306_2_2_9"/>
<dbReference type="Proteomes" id="UP000001415">
    <property type="component" value="Chromosome"/>
</dbReference>
<dbReference type="GO" id="GO:1990904">
    <property type="term" value="C:ribonucleoprotein complex"/>
    <property type="evidence" value="ECO:0007669"/>
    <property type="project" value="UniProtKB-KW"/>
</dbReference>
<dbReference type="GO" id="GO:0005840">
    <property type="term" value="C:ribosome"/>
    <property type="evidence" value="ECO:0007669"/>
    <property type="project" value="UniProtKB-KW"/>
</dbReference>
<dbReference type="GO" id="GO:0003735">
    <property type="term" value="F:structural constituent of ribosome"/>
    <property type="evidence" value="ECO:0007669"/>
    <property type="project" value="InterPro"/>
</dbReference>
<dbReference type="GO" id="GO:0006412">
    <property type="term" value="P:translation"/>
    <property type="evidence" value="ECO:0007669"/>
    <property type="project" value="UniProtKB-UniRule"/>
</dbReference>
<dbReference type="Gene3D" id="4.10.830.30">
    <property type="entry name" value="Ribosomal protein L31"/>
    <property type="match status" value="1"/>
</dbReference>
<dbReference type="HAMAP" id="MF_00502">
    <property type="entry name" value="Ribosomal_bL31_2"/>
    <property type="match status" value="1"/>
</dbReference>
<dbReference type="InterPro" id="IPR034704">
    <property type="entry name" value="Ribosomal_bL28/bL31-like_sf"/>
</dbReference>
<dbReference type="InterPro" id="IPR002150">
    <property type="entry name" value="Ribosomal_bL31"/>
</dbReference>
<dbReference type="InterPro" id="IPR027493">
    <property type="entry name" value="Ribosomal_bL31_B"/>
</dbReference>
<dbReference type="InterPro" id="IPR042105">
    <property type="entry name" value="Ribosomal_bL31_sf"/>
</dbReference>
<dbReference type="NCBIfam" id="TIGR00105">
    <property type="entry name" value="L31"/>
    <property type="match status" value="1"/>
</dbReference>
<dbReference type="NCBIfam" id="NF002462">
    <property type="entry name" value="PRK01678.1"/>
    <property type="match status" value="1"/>
</dbReference>
<dbReference type="PANTHER" id="PTHR33280">
    <property type="entry name" value="50S RIBOSOMAL PROTEIN L31, CHLOROPLASTIC"/>
    <property type="match status" value="1"/>
</dbReference>
<dbReference type="PANTHER" id="PTHR33280:SF1">
    <property type="entry name" value="LARGE RIBOSOMAL SUBUNIT PROTEIN BL31C"/>
    <property type="match status" value="1"/>
</dbReference>
<dbReference type="Pfam" id="PF01197">
    <property type="entry name" value="Ribosomal_L31"/>
    <property type="match status" value="1"/>
</dbReference>
<dbReference type="PRINTS" id="PR01249">
    <property type="entry name" value="RIBOSOMALL31"/>
</dbReference>
<dbReference type="SUPFAM" id="SSF143800">
    <property type="entry name" value="L28p-like"/>
    <property type="match status" value="1"/>
</dbReference>
<dbReference type="PROSITE" id="PS01143">
    <property type="entry name" value="RIBOSOMAL_L31"/>
    <property type="match status" value="1"/>
</dbReference>
<keyword id="KW-0002">3D-structure</keyword>
<keyword id="KW-1185">Reference proteome</keyword>
<keyword id="KW-0687">Ribonucleoprotein</keyword>
<keyword id="KW-0689">Ribosomal protein</keyword>
<name>RL31B_ENTFA</name>
<reference key="1">
    <citation type="journal article" date="2003" name="Science">
        <title>Role of mobile DNA in the evolution of vancomycin-resistant Enterococcus faecalis.</title>
        <authorList>
            <person name="Paulsen I.T."/>
            <person name="Banerjei L."/>
            <person name="Myers G.S.A."/>
            <person name="Nelson K.E."/>
            <person name="Seshadri R."/>
            <person name="Read T.D."/>
            <person name="Fouts D.E."/>
            <person name="Eisen J.A."/>
            <person name="Gill S.R."/>
            <person name="Heidelberg J.F."/>
            <person name="Tettelin H."/>
            <person name="Dodson R.J."/>
            <person name="Umayam L.A."/>
            <person name="Brinkac L.M."/>
            <person name="Beanan M.J."/>
            <person name="Daugherty S.C."/>
            <person name="DeBoy R.T."/>
            <person name="Durkin S.A."/>
            <person name="Kolonay J.F."/>
            <person name="Madupu R."/>
            <person name="Nelson W.C."/>
            <person name="Vamathevan J.J."/>
            <person name="Tran B."/>
            <person name="Upton J."/>
            <person name="Hansen T."/>
            <person name="Shetty J."/>
            <person name="Khouri H.M."/>
            <person name="Utterback T.R."/>
            <person name="Radune D."/>
            <person name="Ketchum K.A."/>
            <person name="Dougherty B.A."/>
            <person name="Fraser C.M."/>
        </authorList>
    </citation>
    <scope>NUCLEOTIDE SEQUENCE [LARGE SCALE GENOMIC DNA]</scope>
    <source>
        <strain>ATCC 700802 / V583</strain>
    </source>
</reference>
<sequence>MKQDIHPNYQPVVFMDSTTGFKFLSGSTKGSSETVEWEDGNTYPLLRVEVTSDSHPFYTGRQKFTQADGRVDRFNKKYGLKDENANPDA</sequence>
<protein>
    <recommendedName>
        <fullName evidence="1">Large ribosomal subunit protein bL31B</fullName>
    </recommendedName>
    <alternativeName>
        <fullName evidence="2">50S ribosomal protein L31 type B</fullName>
    </alternativeName>
</protein>
<evidence type="ECO:0000255" key="1">
    <source>
        <dbReference type="HAMAP-Rule" id="MF_00502"/>
    </source>
</evidence>
<evidence type="ECO:0000305" key="2"/>
<feature type="chain" id="PRO_0000173226" description="Large ribosomal subunit protein bL31B">
    <location>
        <begin position="1"/>
        <end position="89"/>
    </location>
</feature>
<organism>
    <name type="scientific">Enterococcus faecalis (strain ATCC 700802 / V583)</name>
    <dbReference type="NCBI Taxonomy" id="226185"/>
    <lineage>
        <taxon>Bacteria</taxon>
        <taxon>Bacillati</taxon>
        <taxon>Bacillota</taxon>
        <taxon>Bacilli</taxon>
        <taxon>Lactobacillales</taxon>
        <taxon>Enterococcaceae</taxon>
        <taxon>Enterococcus</taxon>
    </lineage>
</organism>
<comment type="subunit">
    <text evidence="1">Part of the 50S ribosomal subunit.</text>
</comment>
<comment type="similarity">
    <text evidence="1">Belongs to the bacterial ribosomal protein bL31 family. Type B subfamily.</text>
</comment>
<proteinExistence type="evidence at protein level"/>